<evidence type="ECO:0000255" key="1">
    <source>
        <dbReference type="HAMAP-Rule" id="MF_00765"/>
    </source>
</evidence>
<evidence type="ECO:0000256" key="2">
    <source>
        <dbReference type="SAM" id="MobiDB-lite"/>
    </source>
</evidence>
<organism>
    <name type="scientific">Sodalis glossinidius (strain morsitans)</name>
    <dbReference type="NCBI Taxonomy" id="343509"/>
    <lineage>
        <taxon>Bacteria</taxon>
        <taxon>Pseudomonadati</taxon>
        <taxon>Pseudomonadota</taxon>
        <taxon>Gammaproteobacteria</taxon>
        <taxon>Enterobacterales</taxon>
        <taxon>Bruguierivoracaceae</taxon>
        <taxon>Sodalis</taxon>
    </lineage>
</organism>
<proteinExistence type="inferred from homology"/>
<name>DARP_SODGM</name>
<keyword id="KW-0963">Cytoplasm</keyword>
<keyword id="KW-0690">Ribosome biogenesis</keyword>
<keyword id="KW-0694">RNA-binding</keyword>
<keyword id="KW-0699">rRNA-binding</keyword>
<dbReference type="EMBL" id="AP008232">
    <property type="protein sequence ID" value="BAE73440.1"/>
    <property type="molecule type" value="Genomic_DNA"/>
</dbReference>
<dbReference type="RefSeq" id="WP_011410029.1">
    <property type="nucleotide sequence ID" value="NC_007712.1"/>
</dbReference>
<dbReference type="SMR" id="Q2NWN5"/>
<dbReference type="STRING" id="343509.SG0165"/>
<dbReference type="KEGG" id="sgl:SG0165"/>
<dbReference type="eggNOG" id="COG3028">
    <property type="taxonomic scope" value="Bacteria"/>
</dbReference>
<dbReference type="HOGENOM" id="CLU_106757_2_0_6"/>
<dbReference type="OrthoDB" id="5293604at2"/>
<dbReference type="Proteomes" id="UP000001932">
    <property type="component" value="Chromosome"/>
</dbReference>
<dbReference type="GO" id="GO:0005829">
    <property type="term" value="C:cytosol"/>
    <property type="evidence" value="ECO:0007669"/>
    <property type="project" value="TreeGrafter"/>
</dbReference>
<dbReference type="GO" id="GO:0043022">
    <property type="term" value="F:ribosome binding"/>
    <property type="evidence" value="ECO:0007669"/>
    <property type="project" value="UniProtKB-UniRule"/>
</dbReference>
<dbReference type="GO" id="GO:0019843">
    <property type="term" value="F:rRNA binding"/>
    <property type="evidence" value="ECO:0007669"/>
    <property type="project" value="UniProtKB-UniRule"/>
</dbReference>
<dbReference type="GO" id="GO:1902626">
    <property type="term" value="P:assembly of large subunit precursor of preribosome"/>
    <property type="evidence" value="ECO:0007669"/>
    <property type="project" value="UniProtKB-UniRule"/>
</dbReference>
<dbReference type="CDD" id="cd16331">
    <property type="entry name" value="YjgA-like"/>
    <property type="match status" value="1"/>
</dbReference>
<dbReference type="FunFam" id="1.10.60.30:FF:000001">
    <property type="entry name" value="UPF0307 protein YjgA"/>
    <property type="match status" value="1"/>
</dbReference>
<dbReference type="FunFam" id="1.10.60.30:FF:000002">
    <property type="entry name" value="UPF0307 protein YjgA"/>
    <property type="match status" value="1"/>
</dbReference>
<dbReference type="Gene3D" id="1.10.60.30">
    <property type="entry name" value="PSPTO4464-like domains"/>
    <property type="match status" value="2"/>
</dbReference>
<dbReference type="HAMAP" id="MF_00765">
    <property type="entry name" value="DarP"/>
    <property type="match status" value="1"/>
</dbReference>
<dbReference type="InterPro" id="IPR006839">
    <property type="entry name" value="DarP"/>
</dbReference>
<dbReference type="InterPro" id="IPR023153">
    <property type="entry name" value="DarP_sf"/>
</dbReference>
<dbReference type="NCBIfam" id="NF003593">
    <property type="entry name" value="PRK05255.1-1"/>
    <property type="match status" value="1"/>
</dbReference>
<dbReference type="PANTHER" id="PTHR38101">
    <property type="entry name" value="UPF0307 PROTEIN YJGA"/>
    <property type="match status" value="1"/>
</dbReference>
<dbReference type="PANTHER" id="PTHR38101:SF1">
    <property type="entry name" value="UPF0307 PROTEIN YJGA"/>
    <property type="match status" value="1"/>
</dbReference>
<dbReference type="Pfam" id="PF04751">
    <property type="entry name" value="DarP"/>
    <property type="match status" value="1"/>
</dbReference>
<dbReference type="PIRSF" id="PIRSF016183">
    <property type="entry name" value="UCP016183"/>
    <property type="match status" value="1"/>
</dbReference>
<dbReference type="SUPFAM" id="SSF158710">
    <property type="entry name" value="PSPTO4464-like"/>
    <property type="match status" value="1"/>
</dbReference>
<feature type="chain" id="PRO_0000257643" description="Dual-action ribosomal maturation protein DarP">
    <location>
        <begin position="1"/>
        <end position="182"/>
    </location>
</feature>
<feature type="region of interest" description="Disordered" evidence="2">
    <location>
        <begin position="1"/>
        <end position="20"/>
    </location>
</feature>
<sequence>MNKQPEEWQDPQSLQQQDDEQDEIIWVSKSEIKRDAETLKQLGVELVSLGKNALEKIPLDDDLRCAIALAQRIKREGQRRQIQLIGKMLRARDPEPIQQALDKLKNRHNQQITLFHKLEILRDKLLAQGDDAIAQVLEHYPQADRQQLRALVRNAQKEKAAKKPPKTARQLYQYLHTLSEAD</sequence>
<reference key="1">
    <citation type="journal article" date="2006" name="Genome Res.">
        <title>Massive genome erosion and functional adaptations provide insights into the symbiotic lifestyle of Sodalis glossinidius in the tsetse host.</title>
        <authorList>
            <person name="Toh H."/>
            <person name="Weiss B.L."/>
            <person name="Perkin S.A.H."/>
            <person name="Yamashita A."/>
            <person name="Oshima K."/>
            <person name="Hattori M."/>
            <person name="Aksoy S."/>
        </authorList>
    </citation>
    <scope>NUCLEOTIDE SEQUENCE [LARGE SCALE GENOMIC DNA]</scope>
    <source>
        <strain>morsitans</strain>
    </source>
</reference>
<comment type="function">
    <text evidence="1">Member of a network of 50S ribosomal subunit biogenesis factors which assembles along the 30S-50S interface, preventing incorrect 23S rRNA structures from forming. Promotes peptidyl transferase center (PTC) maturation.</text>
</comment>
<comment type="subcellular location">
    <subcellularLocation>
        <location evidence="1">Cytoplasm</location>
    </subcellularLocation>
    <text evidence="1">Associates with late stage pre-50S ribosomal subunits.</text>
</comment>
<comment type="similarity">
    <text evidence="1">Belongs to the DarP family.</text>
</comment>
<accession>Q2NWN5</accession>
<protein>
    <recommendedName>
        <fullName evidence="1">Dual-action ribosomal maturation protein DarP</fullName>
    </recommendedName>
    <alternativeName>
        <fullName evidence="1">Large ribosomal subunit assembly factor DarP</fullName>
    </alternativeName>
</protein>
<gene>
    <name evidence="1" type="primary">darP</name>
    <name type="ordered locus">SG0165</name>
</gene>